<accession>P11452</accession>
<accession>P15741</accession>
<evidence type="ECO:0000250" key="1"/>
<evidence type="ECO:0000305" key="2"/>
<feature type="chain" id="PRO_0000171253" description="Chloromuconate cycloisomerase">
    <location>
        <begin position="1"/>
        <end position="370"/>
    </location>
</feature>
<feature type="active site" description="Proton acceptor" evidence="1">
    <location>
        <position position="165"/>
    </location>
</feature>
<feature type="active site" description="Proton donor" evidence="1">
    <location>
        <position position="323"/>
    </location>
</feature>
<feature type="binding site" evidence="1">
    <location>
        <position position="194"/>
    </location>
    <ligand>
        <name>Mn(2+)</name>
        <dbReference type="ChEBI" id="CHEBI:29035"/>
    </ligand>
</feature>
<feature type="binding site" evidence="1">
    <location>
        <position position="220"/>
    </location>
    <ligand>
        <name>Mn(2+)</name>
        <dbReference type="ChEBI" id="CHEBI:29035"/>
    </ligand>
</feature>
<feature type="binding site" evidence="1">
    <location>
        <position position="245"/>
    </location>
    <ligand>
        <name>Mn(2+)</name>
        <dbReference type="ChEBI" id="CHEBI:29035"/>
    </ligand>
</feature>
<feature type="sequence conflict" description="In Ref. 1 and 2." evidence="2" ref="1 2">
    <original>V</original>
    <variation>C</variation>
    <location>
        <position position="42"/>
    </location>
</feature>
<feature type="sequence conflict" description="In Ref. 1 and 2." evidence="2" ref="1 2">
    <original>R</original>
    <variation>H</variation>
    <location>
        <position position="114"/>
    </location>
</feature>
<name>CLCB_PSEPU</name>
<gene>
    <name type="primary">clcB</name>
</gene>
<reference key="1">
    <citation type="journal article" date="1987" name="Proc. Natl. Acad. Sci. U.S.A.">
        <title>Organization and nucleotide sequence determination of a gene cluster involved in 3-chlorocatechol degradation.</title>
        <authorList>
            <person name="Frantz B."/>
            <person name="Chakrabarty A.M."/>
        </authorList>
    </citation>
    <scope>NUCLEOTIDE SEQUENCE [GENOMIC DNA]</scope>
</reference>
<reference key="2">
    <citation type="journal article" date="1987" name="Gene">
        <title>Cloning and complete nucleotide sequence determination of the catB gene encoding cis,cis-muconate lactonizing enzyme.</title>
        <authorList>
            <person name="Aldrich T.L."/>
            <person name="Frantz B."/>
            <person name="Gill J.F."/>
            <person name="Kilbane J.J."/>
            <person name="Chakrabarty A.M."/>
        </authorList>
    </citation>
    <scope>NUCLEOTIDE SEQUENCE [GENOMIC DNA]</scope>
</reference>
<reference key="3">
    <citation type="journal article" date="1989" name="Gene">
        <title>Operon structure and nucleotide homology of the chlorocatechol oxidation genes of plasmids pJP4 and pAC27.</title>
        <authorList>
            <person name="Ghosal D."/>
            <person name="You I.-S."/>
        </authorList>
    </citation>
    <scope>NUCLEOTIDE SEQUENCE [GENOMIC DNA]</scope>
    <source>
        <strain>AC867</strain>
    </source>
</reference>
<dbReference type="EC" id="5.5.1.7"/>
<dbReference type="EMBL" id="M16964">
    <property type="protein sequence ID" value="AAA98282.1"/>
    <property type="molecule type" value="Genomic_DNA"/>
</dbReference>
<dbReference type="EMBL" id="M31457">
    <property type="protein sequence ID" value="AAA98260.1"/>
    <property type="molecule type" value="Genomic_DNA"/>
</dbReference>
<dbReference type="PIR" id="JQ0176">
    <property type="entry name" value="JQ0176"/>
</dbReference>
<dbReference type="SMR" id="P11452"/>
<dbReference type="UniPathway" id="UPA00083"/>
<dbReference type="GO" id="GO:0018850">
    <property type="term" value="F:chloromuconate cycloisomerase activity"/>
    <property type="evidence" value="ECO:0007669"/>
    <property type="project" value="UniProtKB-EC"/>
</dbReference>
<dbReference type="GO" id="GO:0030145">
    <property type="term" value="F:manganese ion binding"/>
    <property type="evidence" value="ECO:0007669"/>
    <property type="project" value="InterPro"/>
</dbReference>
<dbReference type="GO" id="GO:0018849">
    <property type="term" value="F:muconate cycloisomerase activity"/>
    <property type="evidence" value="ECO:0007669"/>
    <property type="project" value="InterPro"/>
</dbReference>
<dbReference type="GO" id="GO:0009063">
    <property type="term" value="P:amino acid catabolic process"/>
    <property type="evidence" value="ECO:0007669"/>
    <property type="project" value="InterPro"/>
</dbReference>
<dbReference type="CDD" id="cd03318">
    <property type="entry name" value="MLE"/>
    <property type="match status" value="1"/>
</dbReference>
<dbReference type="Gene3D" id="3.20.20.120">
    <property type="entry name" value="Enolase-like C-terminal domain"/>
    <property type="match status" value="1"/>
</dbReference>
<dbReference type="Gene3D" id="3.30.390.10">
    <property type="entry name" value="Enolase-like, N-terminal domain"/>
    <property type="match status" value="1"/>
</dbReference>
<dbReference type="InterPro" id="IPR013370">
    <property type="entry name" value="Chloromuconate_cycloisomerase"/>
</dbReference>
<dbReference type="InterPro" id="IPR036849">
    <property type="entry name" value="Enolase-like_C_sf"/>
</dbReference>
<dbReference type="InterPro" id="IPR029017">
    <property type="entry name" value="Enolase-like_N"/>
</dbReference>
<dbReference type="InterPro" id="IPR029065">
    <property type="entry name" value="Enolase_C-like"/>
</dbReference>
<dbReference type="InterPro" id="IPR018110">
    <property type="entry name" value="Mandel_Rmase/mucon_lact_enz_CS"/>
</dbReference>
<dbReference type="InterPro" id="IPR013342">
    <property type="entry name" value="Mandelate_racemase_C"/>
</dbReference>
<dbReference type="InterPro" id="IPR013341">
    <property type="entry name" value="Mandelate_racemase_N_dom"/>
</dbReference>
<dbReference type="NCBIfam" id="TIGR02534">
    <property type="entry name" value="mucon_cyclo"/>
    <property type="match status" value="1"/>
</dbReference>
<dbReference type="PANTHER" id="PTHR48073:SF2">
    <property type="entry name" value="O-SUCCINYLBENZOATE SYNTHASE"/>
    <property type="match status" value="1"/>
</dbReference>
<dbReference type="PANTHER" id="PTHR48073">
    <property type="entry name" value="O-SUCCINYLBENZOATE SYNTHASE-RELATED"/>
    <property type="match status" value="1"/>
</dbReference>
<dbReference type="Pfam" id="PF13378">
    <property type="entry name" value="MR_MLE_C"/>
    <property type="match status" value="1"/>
</dbReference>
<dbReference type="Pfam" id="PF02746">
    <property type="entry name" value="MR_MLE_N"/>
    <property type="match status" value="1"/>
</dbReference>
<dbReference type="SFLD" id="SFLDG01258">
    <property type="entry name" value="(chloro)muconate_cycloisomeras"/>
    <property type="match status" value="1"/>
</dbReference>
<dbReference type="SFLD" id="SFLDS00001">
    <property type="entry name" value="Enolase"/>
    <property type="match status" value="1"/>
</dbReference>
<dbReference type="SFLD" id="SFLDF00009">
    <property type="entry name" value="o-succinylbenzoate_synthase"/>
    <property type="match status" value="1"/>
</dbReference>
<dbReference type="SMART" id="SM00922">
    <property type="entry name" value="MR_MLE"/>
    <property type="match status" value="1"/>
</dbReference>
<dbReference type="SUPFAM" id="SSF51604">
    <property type="entry name" value="Enolase C-terminal domain-like"/>
    <property type="match status" value="1"/>
</dbReference>
<dbReference type="SUPFAM" id="SSF54826">
    <property type="entry name" value="Enolase N-terminal domain-like"/>
    <property type="match status" value="1"/>
</dbReference>
<dbReference type="PROSITE" id="PS00908">
    <property type="entry name" value="MR_MLE_1"/>
    <property type="match status" value="1"/>
</dbReference>
<dbReference type="PROSITE" id="PS00909">
    <property type="entry name" value="MR_MLE_2"/>
    <property type="match status" value="1"/>
</dbReference>
<protein>
    <recommendedName>
        <fullName>Chloromuconate cycloisomerase</fullName>
        <ecNumber>5.5.1.7</ecNumber>
    </recommendedName>
    <alternativeName>
        <fullName>Muconate cycloisomerase II</fullName>
    </alternativeName>
</protein>
<proteinExistence type="inferred from homology"/>
<geneLocation type="plasmid">
    <name>pAC27</name>
</geneLocation>
<sequence>MKIEAIDVTLVDVPASRPIQMSFTTVQKQSYAIVQIRAGGLVGIGEGSSVGGPTWSSECAETIKVIIETYLAPLLIGKDATNLRELQHLMERAVTGNYSAKAAIDVALHDLKARSLNLPLSDLIGGAIQQGIPIAWTLASGDTQRDIAIAEEMIERRRHNRFKIKLGVRSPADDLRHIEKIIERVGDRAAVRVDINQAWDENTASVWIPRLEAAGVELVEQPVARSNFDALRRLSADNGVAILADESLSSLASAFELARHHCVDAFSLKLCNMGGVANTLKVAAIAEASGIASYGGTMLDSSIGTAAALHVYATLPTMPFECELLGPWVLADTLTQTQLEIKDFEIRLPSGPGLGVDIDPDKLRHFTRAG</sequence>
<organism>
    <name type="scientific">Pseudomonas putida</name>
    <name type="common">Arthrobacter siderocapsulatus</name>
    <dbReference type="NCBI Taxonomy" id="303"/>
    <lineage>
        <taxon>Bacteria</taxon>
        <taxon>Pseudomonadati</taxon>
        <taxon>Pseudomonadota</taxon>
        <taxon>Gammaproteobacteria</taxon>
        <taxon>Pseudomonadales</taxon>
        <taxon>Pseudomonadaceae</taxon>
        <taxon>Pseudomonas</taxon>
    </lineage>
</organism>
<keyword id="KW-0058">Aromatic hydrocarbons catabolism</keyword>
<keyword id="KW-0413">Isomerase</keyword>
<keyword id="KW-0464">Manganese</keyword>
<keyword id="KW-0479">Metal-binding</keyword>
<keyword id="KW-0614">Plasmid</keyword>
<comment type="function">
    <text>Highly active toward chlorinated substrates but retains diminished activity toward the non-chlorinated substrates.</text>
</comment>
<comment type="catalytic activity">
    <reaction>
        <text>2-[(2R)-2-chloro-2,5-dihydro-5-oxofuryl]acetate = 3-chloro-cis,cis-muconate + H(+)</text>
        <dbReference type="Rhea" id="RHEA:11032"/>
        <dbReference type="ChEBI" id="CHEBI:15378"/>
        <dbReference type="ChEBI" id="CHEBI:17589"/>
        <dbReference type="ChEBI" id="CHEBI:85538"/>
        <dbReference type="EC" id="5.5.1.7"/>
    </reaction>
</comment>
<comment type="cofactor">
    <cofactor evidence="1">
        <name>Mn(2+)</name>
        <dbReference type="ChEBI" id="CHEBI:29035"/>
    </cofactor>
</comment>
<comment type="pathway">
    <text>Aromatic compound metabolism; 3-chlorocatechol degradation.</text>
</comment>
<comment type="similarity">
    <text evidence="2">Belongs to the mandelate racemase/muconate lactonizing enzyme family.</text>
</comment>